<feature type="chain" id="PRO_0000300995" description="Formyl-CoA:oxalate CoA-transferase">
    <location>
        <begin position="1"/>
        <end position="416"/>
    </location>
</feature>
<feature type="active site" description="Nucleophile" evidence="2">
    <location>
        <position position="169"/>
    </location>
</feature>
<feature type="binding site" evidence="1">
    <location>
        <begin position="17"/>
        <end position="18"/>
    </location>
    <ligand>
        <name>CoA</name>
        <dbReference type="ChEBI" id="CHEBI:57287"/>
    </ligand>
</feature>
<feature type="binding site" evidence="2">
    <location>
        <position position="38"/>
    </location>
    <ligand>
        <name>CoA</name>
        <dbReference type="ChEBI" id="CHEBI:57287"/>
    </ligand>
</feature>
<feature type="binding site" evidence="1">
    <location>
        <begin position="72"/>
        <end position="75"/>
    </location>
    <ligand>
        <name>CoA</name>
        <dbReference type="ChEBI" id="CHEBI:57287"/>
    </ligand>
</feature>
<feature type="binding site" evidence="1">
    <location>
        <begin position="96"/>
        <end position="98"/>
    </location>
    <ligand>
        <name>CoA</name>
        <dbReference type="ChEBI" id="CHEBI:57287"/>
    </ligand>
</feature>
<feature type="binding site" evidence="2">
    <location>
        <position position="104"/>
    </location>
    <ligand>
        <name>CoA</name>
        <dbReference type="ChEBI" id="CHEBI:57287"/>
    </ligand>
</feature>
<feature type="binding site" evidence="1">
    <location>
        <begin position="137"/>
        <end position="140"/>
    </location>
    <ligand>
        <name>CoA</name>
        <dbReference type="ChEBI" id="CHEBI:57287"/>
    </ligand>
</feature>
<feature type="binding site" evidence="1">
    <location>
        <begin position="248"/>
        <end position="250"/>
    </location>
    <ligand>
        <name>substrate</name>
    </ligand>
</feature>
<feature type="binding site" evidence="1">
    <location>
        <begin position="273"/>
        <end position="275"/>
    </location>
    <ligand>
        <name>CoA</name>
        <dbReference type="ChEBI" id="CHEBI:57287"/>
    </ligand>
</feature>
<proteinExistence type="inferred from homology"/>
<organism>
    <name type="scientific">Shigella dysenteriae serotype 1 (strain Sd197)</name>
    <dbReference type="NCBI Taxonomy" id="300267"/>
    <lineage>
        <taxon>Bacteria</taxon>
        <taxon>Pseudomonadati</taxon>
        <taxon>Pseudomonadota</taxon>
        <taxon>Gammaproteobacteria</taxon>
        <taxon>Enterobacterales</taxon>
        <taxon>Enterobacteriaceae</taxon>
        <taxon>Shigella</taxon>
    </lineage>
</organism>
<dbReference type="EC" id="2.8.3.16" evidence="2"/>
<dbReference type="EMBL" id="CP000034">
    <property type="protein sequence ID" value="ABB62636.1"/>
    <property type="molecule type" value="Genomic_DNA"/>
</dbReference>
<dbReference type="RefSeq" id="WP_000106757.1">
    <property type="nucleotide sequence ID" value="NC_007606.1"/>
</dbReference>
<dbReference type="RefSeq" id="YP_404127.1">
    <property type="nucleotide sequence ID" value="NC_007606.1"/>
</dbReference>
<dbReference type="SMR" id="Q32DG9"/>
<dbReference type="STRING" id="300267.SDY_2572"/>
<dbReference type="EnsemblBacteria" id="ABB62636">
    <property type="protein sequence ID" value="ABB62636"/>
    <property type="gene ID" value="SDY_2572"/>
</dbReference>
<dbReference type="KEGG" id="sdy:SDY_2572"/>
<dbReference type="PATRIC" id="fig|300267.13.peg.3102"/>
<dbReference type="HOGENOM" id="CLU_033975_2_1_6"/>
<dbReference type="UniPathway" id="UPA00540">
    <property type="reaction ID" value="UER00598"/>
</dbReference>
<dbReference type="Proteomes" id="UP000002716">
    <property type="component" value="Chromosome"/>
</dbReference>
<dbReference type="GO" id="GO:0033608">
    <property type="term" value="F:formyl-CoA transferase activity"/>
    <property type="evidence" value="ECO:0007669"/>
    <property type="project" value="UniProtKB-EC"/>
</dbReference>
<dbReference type="GO" id="GO:0033611">
    <property type="term" value="P:oxalate catabolic process"/>
    <property type="evidence" value="ECO:0007669"/>
    <property type="project" value="UniProtKB-UniRule"/>
</dbReference>
<dbReference type="Gene3D" id="3.40.50.10540">
    <property type="entry name" value="Crotonobetainyl-coa:carnitine coa-transferase, domain 1"/>
    <property type="match status" value="1"/>
</dbReference>
<dbReference type="Gene3D" id="3.30.1540.10">
    <property type="entry name" value="formyl-coa transferase, domain 3"/>
    <property type="match status" value="1"/>
</dbReference>
<dbReference type="HAMAP" id="MF_00742">
    <property type="entry name" value="Formyl_CoA_transfer"/>
    <property type="match status" value="1"/>
</dbReference>
<dbReference type="InterPro" id="IPR050483">
    <property type="entry name" value="CoA-transferase_III_domain"/>
</dbReference>
<dbReference type="InterPro" id="IPR003673">
    <property type="entry name" value="CoA-Trfase_fam_III"/>
</dbReference>
<dbReference type="InterPro" id="IPR044855">
    <property type="entry name" value="CoA-Trfase_III_dom3_sf"/>
</dbReference>
<dbReference type="InterPro" id="IPR023606">
    <property type="entry name" value="CoA-Trfase_III_dom_1_sf"/>
</dbReference>
<dbReference type="InterPro" id="IPR017659">
    <property type="entry name" value="Formyl_CoA_transfer"/>
</dbReference>
<dbReference type="NCBIfam" id="TIGR03253">
    <property type="entry name" value="oxalate_frc"/>
    <property type="match status" value="1"/>
</dbReference>
<dbReference type="NCBIfam" id="NF003809">
    <property type="entry name" value="PRK05398.1"/>
    <property type="match status" value="1"/>
</dbReference>
<dbReference type="PANTHER" id="PTHR48207">
    <property type="entry name" value="SUCCINATE--HYDROXYMETHYLGLUTARATE COA-TRANSFERASE"/>
    <property type="match status" value="1"/>
</dbReference>
<dbReference type="PANTHER" id="PTHR48207:SF3">
    <property type="entry name" value="SUCCINATE--HYDROXYMETHYLGLUTARATE COA-TRANSFERASE"/>
    <property type="match status" value="1"/>
</dbReference>
<dbReference type="Pfam" id="PF02515">
    <property type="entry name" value="CoA_transf_3"/>
    <property type="match status" value="1"/>
</dbReference>
<dbReference type="SUPFAM" id="SSF89796">
    <property type="entry name" value="CoA-transferase family III (CaiB/BaiF)"/>
    <property type="match status" value="1"/>
</dbReference>
<sequence length="416" mass="45814">MSTPLQGIKVLDFTGVQSGPSCTQMLAWFGADVIKIERPGVGDVTRHQLRDIPDIDALYFTMLNSNKRSIELNTKTAEGKEVMEKLIREADILVENFHPGAIDHMGFTWEHIQEINPRLIFGSIKGFDECSPYVNVKAYENVAQAAGGAASTTGFWDGPPLVSAAALGDSNTGMHLLIGLLAALLHREKTGRGQRVTMSMQDAVLNLCRVKLRDQQRLDKLGYLEEYPQYPNGTFGDAVPRGGNAGGGGQPGWILKCKGWETDPNAYIYFTIQEQNWENTCKAIGKPDWITDPAYSTAHARQPHIFDIFAEIEKYTVTIDKHEAVAYLTQFDIPCAPVLSMKEISLDPSLRQSGSVVEVEQPLRGKYLTVGCPMKFSAFTPDIKAAPLLGEHTAAVLQELGYSDDEIAAMKQNHAI</sequence>
<keyword id="KW-1185">Reference proteome</keyword>
<keyword id="KW-0808">Transferase</keyword>
<reference key="1">
    <citation type="journal article" date="2005" name="Nucleic Acids Res.">
        <title>Genome dynamics and diversity of Shigella species, the etiologic agents of bacillary dysentery.</title>
        <authorList>
            <person name="Yang F."/>
            <person name="Yang J."/>
            <person name="Zhang X."/>
            <person name="Chen L."/>
            <person name="Jiang Y."/>
            <person name="Yan Y."/>
            <person name="Tang X."/>
            <person name="Wang J."/>
            <person name="Xiong Z."/>
            <person name="Dong J."/>
            <person name="Xue Y."/>
            <person name="Zhu Y."/>
            <person name="Xu X."/>
            <person name="Sun L."/>
            <person name="Chen S."/>
            <person name="Nie H."/>
            <person name="Peng J."/>
            <person name="Xu J."/>
            <person name="Wang Y."/>
            <person name="Yuan Z."/>
            <person name="Wen Y."/>
            <person name="Yao Z."/>
            <person name="Shen Y."/>
            <person name="Qiang B."/>
            <person name="Hou Y."/>
            <person name="Yu J."/>
            <person name="Jin Q."/>
        </authorList>
    </citation>
    <scope>NUCLEOTIDE SEQUENCE [LARGE SCALE GENOMIC DNA]</scope>
    <source>
        <strain>Sd197</strain>
    </source>
</reference>
<name>FCTA_SHIDS</name>
<comment type="function">
    <text evidence="1">Involved in the catabolism of oxalate and in the adapatation to low pH via the induction of the oxalate-dependent acid tolerance response (ATR). Catalyzes the transfer of the CoA moiety from formyl-CoA to oxalate (By similarity).</text>
</comment>
<comment type="catalytic activity">
    <reaction evidence="2">
        <text>formyl-CoA + oxalate = oxalyl-CoA + formate</text>
        <dbReference type="Rhea" id="RHEA:16545"/>
        <dbReference type="ChEBI" id="CHEBI:15740"/>
        <dbReference type="ChEBI" id="CHEBI:30623"/>
        <dbReference type="ChEBI" id="CHEBI:57376"/>
        <dbReference type="ChEBI" id="CHEBI:57388"/>
        <dbReference type="EC" id="2.8.3.16"/>
    </reaction>
</comment>
<comment type="pathway">
    <text evidence="2">Metabolic intermediate degradation; oxalate degradation; CO(2) and formate from oxalate: step 1/2.</text>
</comment>
<comment type="subunit">
    <text evidence="2">Homodimer.</text>
</comment>
<comment type="similarity">
    <text evidence="2">Belongs to the CoA-transferase III family. Frc subfamily.</text>
</comment>
<gene>
    <name evidence="2" type="primary">frc</name>
    <name type="ordered locus">SDY_2572</name>
</gene>
<accession>Q32DG9</accession>
<protein>
    <recommendedName>
        <fullName>Formyl-CoA:oxalate CoA-transferase</fullName>
        <shortName>FCOCT</shortName>
        <ecNumber evidence="2">2.8.3.16</ecNumber>
    </recommendedName>
    <alternativeName>
        <fullName evidence="2">Formyl-coenzyme A transferase</fullName>
        <shortName evidence="2">Formyl-CoA transferase</shortName>
    </alternativeName>
</protein>
<evidence type="ECO:0000250" key="1"/>
<evidence type="ECO:0000255" key="2">
    <source>
        <dbReference type="HAMAP-Rule" id="MF_00742"/>
    </source>
</evidence>